<protein>
    <recommendedName>
        <fullName evidence="8">Palmitoyltransferase ZDHHC5-B</fullName>
        <ecNumber evidence="2">2.3.1.225</ecNumber>
    </recommendedName>
    <alternativeName>
        <fullName evidence="7">Zdhhc5-like</fullName>
    </alternativeName>
    <alternativeName>
        <fullName evidence="8">Zinc finger DHHC domain-containing protein 5-B</fullName>
        <shortName evidence="8">DHHC-5B</shortName>
    </alternativeName>
</protein>
<organism>
    <name type="scientific">Danio rerio</name>
    <name type="common">Zebrafish</name>
    <name type="synonym">Brachydanio rerio</name>
    <dbReference type="NCBI Taxonomy" id="7955"/>
    <lineage>
        <taxon>Eukaryota</taxon>
        <taxon>Metazoa</taxon>
        <taxon>Chordata</taxon>
        <taxon>Craniata</taxon>
        <taxon>Vertebrata</taxon>
        <taxon>Euteleostomi</taxon>
        <taxon>Actinopterygii</taxon>
        <taxon>Neopterygii</taxon>
        <taxon>Teleostei</taxon>
        <taxon>Ostariophysi</taxon>
        <taxon>Cypriniformes</taxon>
        <taxon>Danionidae</taxon>
        <taxon>Danioninae</taxon>
        <taxon>Danio</taxon>
    </lineage>
</organism>
<sequence>MPVGLSVGGALGDPSPSRPFRPSRYVPVSAATAFLVGATTLFLCFTCPWLSEKFSSFIPLYNVVVFLFTLANFCMATFMDPGVFPRAEEDEDKEDDFRAPLYKTVEVRGIQVRMKWCSTCRFYRPPRCSHCSVCDNCVEEFDHHCPWVNNCIGRRNYRYFFLFLLSLTVHIMDVFGFSLLYILHHTKQLDLVQSGVTMAVMCVAGLFFVPVAGLTGFHVVLVARGRTTNEQVTGKFRGGVNPFTHGCFKNIAHVLCSSQAPRYLGRLRKPQSVQVQPPFLRPPLSEAQLAAKVLDNGIQQSKSSLEIMESQSTDADPPPPPKPEHRYPGLPHTQNEECSLLTEAPPTPSLYKYRPAYSSPGKNHTASTHSSKMSRGNSMTESPSVPVTTGQPSYRSDPSLSSRGAAGCRGGAEGGRSGSGGLGGASAFGGRSYPSFTDTLLQSAAASCSSSLRSAHTAHNALGPLISEGTTSTSYKSLANQTRNGSLSYESLLTPSESPEFESAAHELSPPRPHPPHSLSTAAGAAPILGYTSPFLSAQQREGSLQACPAPLRPSPNRAFLRPISSPPSRAPPLSPRARSLGSPPPGPAPGHTPLGKSMSYGGGAELQHRPSSSGGGTSMPNSTIKQNVANHNTHSHKPARGVKKVSGVGGTTYEISV</sequence>
<evidence type="ECO:0000250" key="1">
    <source>
        <dbReference type="UniProtKB" id="Q8IUH5"/>
    </source>
</evidence>
<evidence type="ECO:0000250" key="2">
    <source>
        <dbReference type="UniProtKB" id="Q8VDZ4"/>
    </source>
</evidence>
<evidence type="ECO:0000255" key="3"/>
<evidence type="ECO:0000255" key="4">
    <source>
        <dbReference type="PROSITE-ProRule" id="PRU00067"/>
    </source>
</evidence>
<evidence type="ECO:0000256" key="5">
    <source>
        <dbReference type="SAM" id="MobiDB-lite"/>
    </source>
</evidence>
<evidence type="ECO:0000269" key="6">
    <source>
    </source>
</evidence>
<evidence type="ECO:0000303" key="7">
    <source>
    </source>
</evidence>
<evidence type="ECO:0000305" key="8"/>
<evidence type="ECO:0000312" key="9">
    <source>
        <dbReference type="ZFIN" id="ZDB-GENE-101117-1"/>
    </source>
</evidence>
<proteinExistence type="evidence at transcript level"/>
<feature type="chain" id="PRO_0000451034" description="Palmitoyltransferase ZDHHC5-B">
    <location>
        <begin position="1"/>
        <end position="658"/>
    </location>
</feature>
<feature type="topological domain" description="Cytoplasmic" evidence="8">
    <location>
        <begin position="1"/>
        <end position="24"/>
    </location>
</feature>
<feature type="transmembrane region" description="Helical" evidence="3">
    <location>
        <begin position="25"/>
        <end position="45"/>
    </location>
</feature>
<feature type="topological domain" description="Extracellular" evidence="8">
    <location>
        <begin position="46"/>
        <end position="56"/>
    </location>
</feature>
<feature type="transmembrane region" description="Helical" evidence="3">
    <location>
        <begin position="57"/>
        <end position="77"/>
    </location>
</feature>
<feature type="topological domain" description="Cytoplasmic" evidence="8">
    <location>
        <begin position="78"/>
        <end position="159"/>
    </location>
</feature>
<feature type="transmembrane region" description="Helical" evidence="3">
    <location>
        <begin position="160"/>
        <end position="180"/>
    </location>
</feature>
<feature type="topological domain" description="Extracellular" evidence="8">
    <location>
        <begin position="181"/>
        <end position="202"/>
    </location>
</feature>
<feature type="transmembrane region" description="Helical" evidence="3">
    <location>
        <begin position="203"/>
        <end position="223"/>
    </location>
</feature>
<feature type="topological domain" description="Cytoplasmic" evidence="8">
    <location>
        <begin position="224"/>
        <end position="658"/>
    </location>
</feature>
<feature type="domain" description="DHHC" evidence="4">
    <location>
        <begin position="115"/>
        <end position="165"/>
    </location>
</feature>
<feature type="region of interest" description="Disordered" evidence="5">
    <location>
        <begin position="306"/>
        <end position="419"/>
    </location>
</feature>
<feature type="region of interest" description="Disordered" evidence="5">
    <location>
        <begin position="490"/>
        <end position="522"/>
    </location>
</feature>
<feature type="region of interest" description="Disordered" evidence="5">
    <location>
        <begin position="540"/>
        <end position="658"/>
    </location>
</feature>
<feature type="compositionally biased region" description="Polar residues" evidence="5">
    <location>
        <begin position="360"/>
        <end position="398"/>
    </location>
</feature>
<feature type="compositionally biased region" description="Gly residues" evidence="5">
    <location>
        <begin position="407"/>
        <end position="419"/>
    </location>
</feature>
<feature type="compositionally biased region" description="Pro residues" evidence="5">
    <location>
        <begin position="565"/>
        <end position="575"/>
    </location>
</feature>
<feature type="compositionally biased region" description="Polar residues" evidence="5">
    <location>
        <begin position="619"/>
        <end position="633"/>
    </location>
</feature>
<feature type="compositionally biased region" description="Basic residues" evidence="5">
    <location>
        <begin position="634"/>
        <end position="644"/>
    </location>
</feature>
<feature type="active site" description="S-palmitoyl cysteine intermediate" evidence="2">
    <location>
        <position position="145"/>
    </location>
</feature>
<keyword id="KW-0012">Acyltransferase</keyword>
<keyword id="KW-1003">Cell membrane</keyword>
<keyword id="KW-0449">Lipoprotein</keyword>
<keyword id="KW-0472">Membrane</keyword>
<keyword id="KW-0488">Methylation</keyword>
<keyword id="KW-0564">Palmitate</keyword>
<keyword id="KW-0597">Phosphoprotein</keyword>
<keyword id="KW-1185">Reference proteome</keyword>
<keyword id="KW-0808">Transferase</keyword>
<keyword id="KW-0812">Transmembrane</keyword>
<keyword id="KW-1133">Transmembrane helix</keyword>
<gene>
    <name evidence="9" type="primary">zdhhc5b</name>
</gene>
<dbReference type="EC" id="2.3.1.225" evidence="2"/>
<dbReference type="EMBL" id="CR855307">
    <property type="status" value="NOT_ANNOTATED_CDS"/>
    <property type="molecule type" value="Genomic_DNA"/>
</dbReference>
<dbReference type="RefSeq" id="XP_009289570.1">
    <property type="nucleotide sequence ID" value="XM_009291295.4"/>
</dbReference>
<dbReference type="RefSeq" id="XP_009289571.1">
    <property type="nucleotide sequence ID" value="XM_009291296.2"/>
</dbReference>
<dbReference type="SMR" id="E7FBS9"/>
<dbReference type="FunCoup" id="E7FBS9">
    <property type="interactions" value="925"/>
</dbReference>
<dbReference type="PaxDb" id="7955-ENSDARP00000104903"/>
<dbReference type="Ensembl" id="ENSDART00000128508">
    <property type="protein sequence ID" value="ENSDARP00000104903"/>
    <property type="gene ID" value="ENSDARG00000087417"/>
</dbReference>
<dbReference type="GeneID" id="792560"/>
<dbReference type="KEGG" id="dre:792560"/>
<dbReference type="AGR" id="ZFIN:ZDB-GENE-101117-1"/>
<dbReference type="CTD" id="792560"/>
<dbReference type="ZFIN" id="ZDB-GENE-101117-1">
    <property type="gene designation" value="zdhhc5b"/>
</dbReference>
<dbReference type="eggNOG" id="KOG1311">
    <property type="taxonomic scope" value="Eukaryota"/>
</dbReference>
<dbReference type="HOGENOM" id="CLU_013779_2_0_1"/>
<dbReference type="InParanoid" id="E7FBS9"/>
<dbReference type="OMA" id="KMTRGES"/>
<dbReference type="OrthoDB" id="4096362at2759"/>
<dbReference type="PhylomeDB" id="E7FBS9"/>
<dbReference type="TreeFam" id="TF354263"/>
<dbReference type="PRO" id="PR:E7FBS9"/>
<dbReference type="Proteomes" id="UP000000437">
    <property type="component" value="Chromosome 14"/>
</dbReference>
<dbReference type="Bgee" id="ENSDARG00000087417">
    <property type="expression patterns" value="Expressed in zone of skin and 24 other cell types or tissues"/>
</dbReference>
<dbReference type="GO" id="GO:0005886">
    <property type="term" value="C:plasma membrane"/>
    <property type="evidence" value="ECO:0007669"/>
    <property type="project" value="UniProtKB-SubCell"/>
</dbReference>
<dbReference type="GO" id="GO:0016409">
    <property type="term" value="F:palmitoyltransferase activity"/>
    <property type="evidence" value="ECO:0000318"/>
    <property type="project" value="GO_Central"/>
</dbReference>
<dbReference type="GO" id="GO:0019706">
    <property type="term" value="F:protein-cysteine S-palmitoyltransferase activity"/>
    <property type="evidence" value="ECO:0007669"/>
    <property type="project" value="UniProtKB-EC"/>
</dbReference>
<dbReference type="GO" id="GO:0062208">
    <property type="term" value="P:positive regulation of pattern recognition receptor signaling pathway"/>
    <property type="evidence" value="ECO:0000318"/>
    <property type="project" value="GO_Central"/>
</dbReference>
<dbReference type="InterPro" id="IPR001594">
    <property type="entry name" value="Palmitoyltrfase_DHHC"/>
</dbReference>
<dbReference type="PANTHER" id="PTHR12349">
    <property type="entry name" value="ANKYRIN REPEAT AND LEM DOMAIN-CONTAINING PROTEIN 2"/>
    <property type="match status" value="1"/>
</dbReference>
<dbReference type="PANTHER" id="PTHR12349:SF3">
    <property type="entry name" value="PALMITOYLTRANSFERASE ZDHHC5"/>
    <property type="match status" value="1"/>
</dbReference>
<dbReference type="Pfam" id="PF01529">
    <property type="entry name" value="DHHC"/>
    <property type="match status" value="1"/>
</dbReference>
<dbReference type="PROSITE" id="PS50216">
    <property type="entry name" value="DHHC"/>
    <property type="match status" value="1"/>
</dbReference>
<accession>E7FBS9</accession>
<comment type="function">
    <text evidence="2">Palmitoyltransferase that catalyzes the addition of palmitate onto various protein substrates and is involved in a variety of cellular processes.</text>
</comment>
<comment type="catalytic activity">
    <reaction evidence="2">
        <text>L-cysteinyl-[protein] + hexadecanoyl-CoA = S-hexadecanoyl-L-cysteinyl-[protein] + CoA</text>
        <dbReference type="Rhea" id="RHEA:36683"/>
        <dbReference type="Rhea" id="RHEA-COMP:10131"/>
        <dbReference type="Rhea" id="RHEA-COMP:11032"/>
        <dbReference type="ChEBI" id="CHEBI:29950"/>
        <dbReference type="ChEBI" id="CHEBI:57287"/>
        <dbReference type="ChEBI" id="CHEBI:57379"/>
        <dbReference type="ChEBI" id="CHEBI:74151"/>
        <dbReference type="EC" id="2.3.1.225"/>
    </reaction>
    <physiologicalReaction direction="left-to-right" evidence="2">
        <dbReference type="Rhea" id="RHEA:36684"/>
    </physiologicalReaction>
</comment>
<comment type="subcellular location">
    <subcellularLocation>
        <location evidence="2">Cell membrane</location>
        <topology evidence="3">Multi-pass membrane protein</topology>
    </subcellularLocation>
</comment>
<comment type="developmental stage">
    <text evidence="6">Probably maternally supplied, the zygotic expression is detected early during development at the 512-cell stage.</text>
</comment>
<comment type="domain">
    <text evidence="1">The DHHC domain is required for palmitoyltransferase activity.</text>
</comment>
<comment type="similarity">
    <text evidence="8">Belongs to the DHHC palmitoyltransferase family. ERF2/ZDHHC9 subfamily.</text>
</comment>
<reference key="1">
    <citation type="journal article" date="2013" name="Nature">
        <title>The zebrafish reference genome sequence and its relationship to the human genome.</title>
        <authorList>
            <person name="Howe K."/>
            <person name="Clark M.D."/>
            <person name="Torroja C.F."/>
            <person name="Torrance J."/>
            <person name="Berthelot C."/>
            <person name="Muffato M."/>
            <person name="Collins J.E."/>
            <person name="Humphray S."/>
            <person name="McLaren K."/>
            <person name="Matthews L."/>
            <person name="McLaren S."/>
            <person name="Sealy I."/>
            <person name="Caccamo M."/>
            <person name="Churcher C."/>
            <person name="Scott C."/>
            <person name="Barrett J.C."/>
            <person name="Koch R."/>
            <person name="Rauch G.J."/>
            <person name="White S."/>
            <person name="Chow W."/>
            <person name="Kilian B."/>
            <person name="Quintais L.T."/>
            <person name="Guerra-Assuncao J.A."/>
            <person name="Zhou Y."/>
            <person name="Gu Y."/>
            <person name="Yen J."/>
            <person name="Vogel J.H."/>
            <person name="Eyre T."/>
            <person name="Redmond S."/>
            <person name="Banerjee R."/>
            <person name="Chi J."/>
            <person name="Fu B."/>
            <person name="Langley E."/>
            <person name="Maguire S.F."/>
            <person name="Laird G.K."/>
            <person name="Lloyd D."/>
            <person name="Kenyon E."/>
            <person name="Donaldson S."/>
            <person name="Sehra H."/>
            <person name="Almeida-King J."/>
            <person name="Loveland J."/>
            <person name="Trevanion S."/>
            <person name="Jones M."/>
            <person name="Quail M."/>
            <person name="Willey D."/>
            <person name="Hunt A."/>
            <person name="Burton J."/>
            <person name="Sims S."/>
            <person name="McLay K."/>
            <person name="Plumb B."/>
            <person name="Davis J."/>
            <person name="Clee C."/>
            <person name="Oliver K."/>
            <person name="Clark R."/>
            <person name="Riddle C."/>
            <person name="Elliot D."/>
            <person name="Threadgold G."/>
            <person name="Harden G."/>
            <person name="Ware D."/>
            <person name="Begum S."/>
            <person name="Mortimore B."/>
            <person name="Kerry G."/>
            <person name="Heath P."/>
            <person name="Phillimore B."/>
            <person name="Tracey A."/>
            <person name="Corby N."/>
            <person name="Dunn M."/>
            <person name="Johnson C."/>
            <person name="Wood J."/>
            <person name="Clark S."/>
            <person name="Pelan S."/>
            <person name="Griffiths G."/>
            <person name="Smith M."/>
            <person name="Glithero R."/>
            <person name="Howden P."/>
            <person name="Barker N."/>
            <person name="Lloyd C."/>
            <person name="Stevens C."/>
            <person name="Harley J."/>
            <person name="Holt K."/>
            <person name="Panagiotidis G."/>
            <person name="Lovell J."/>
            <person name="Beasley H."/>
            <person name="Henderson C."/>
            <person name="Gordon D."/>
            <person name="Auger K."/>
            <person name="Wright D."/>
            <person name="Collins J."/>
            <person name="Raisen C."/>
            <person name="Dyer L."/>
            <person name="Leung K."/>
            <person name="Robertson L."/>
            <person name="Ambridge K."/>
            <person name="Leongamornlert D."/>
            <person name="McGuire S."/>
            <person name="Gilderthorp R."/>
            <person name="Griffiths C."/>
            <person name="Manthravadi D."/>
            <person name="Nichol S."/>
            <person name="Barker G."/>
            <person name="Whitehead S."/>
            <person name="Kay M."/>
            <person name="Brown J."/>
            <person name="Murnane C."/>
            <person name="Gray E."/>
            <person name="Humphries M."/>
            <person name="Sycamore N."/>
            <person name="Barker D."/>
            <person name="Saunders D."/>
            <person name="Wallis J."/>
            <person name="Babbage A."/>
            <person name="Hammond S."/>
            <person name="Mashreghi-Mohammadi M."/>
            <person name="Barr L."/>
            <person name="Martin S."/>
            <person name="Wray P."/>
            <person name="Ellington A."/>
            <person name="Matthews N."/>
            <person name="Ellwood M."/>
            <person name="Woodmansey R."/>
            <person name="Clark G."/>
            <person name="Cooper J."/>
            <person name="Tromans A."/>
            <person name="Grafham D."/>
            <person name="Skuce C."/>
            <person name="Pandian R."/>
            <person name="Andrews R."/>
            <person name="Harrison E."/>
            <person name="Kimberley A."/>
            <person name="Garnett J."/>
            <person name="Fosker N."/>
            <person name="Hall R."/>
            <person name="Garner P."/>
            <person name="Kelly D."/>
            <person name="Bird C."/>
            <person name="Palmer S."/>
            <person name="Gehring I."/>
            <person name="Berger A."/>
            <person name="Dooley C.M."/>
            <person name="Ersan-Urun Z."/>
            <person name="Eser C."/>
            <person name="Geiger H."/>
            <person name="Geisler M."/>
            <person name="Karotki L."/>
            <person name="Kirn A."/>
            <person name="Konantz J."/>
            <person name="Konantz M."/>
            <person name="Oberlander M."/>
            <person name="Rudolph-Geiger S."/>
            <person name="Teucke M."/>
            <person name="Lanz C."/>
            <person name="Raddatz G."/>
            <person name="Osoegawa K."/>
            <person name="Zhu B."/>
            <person name="Rapp A."/>
            <person name="Widaa S."/>
            <person name="Langford C."/>
            <person name="Yang F."/>
            <person name="Schuster S.C."/>
            <person name="Carter N.P."/>
            <person name="Harrow J."/>
            <person name="Ning Z."/>
            <person name="Herrero J."/>
            <person name="Searle S.M."/>
            <person name="Enright A."/>
            <person name="Geisler R."/>
            <person name="Plasterk R.H."/>
            <person name="Lee C."/>
            <person name="Westerfield M."/>
            <person name="de Jong P.J."/>
            <person name="Zon L.I."/>
            <person name="Postlethwait J.H."/>
            <person name="Nusslein-Volhard C."/>
            <person name="Hubbard T.J."/>
            <person name="Roest Crollius H."/>
            <person name="Rogers J."/>
            <person name="Stemple D.L."/>
        </authorList>
    </citation>
    <scope>NUCLEOTIDE SEQUENCE [LARGE SCALE GENOMIC DNA]</scope>
    <source>
        <strain>Tuebingen</strain>
    </source>
</reference>
<reference key="2">
    <citation type="journal article" date="2016" name="Biochem. Biophys. Res. Commun.">
        <title>Protein palmitoylation activate zygotic gene expression during the maternal-to-zygotic transition.</title>
        <authorList>
            <person name="Du Z."/>
            <person name="Chen X."/>
            <person name="Li X."/>
            <person name="He K."/>
            <person name="Ji S."/>
            <person name="Shi W."/>
            <person name="Hao A."/>
        </authorList>
    </citation>
    <scope>DEVELOPMENTAL STAGE</scope>
</reference>
<name>DHC5B_DANRE</name>